<sequence>MGNHRSDLKATRRWVVKVGSALLTANGRGLDTGCIQELASHIARLRNKGYTIVLVSSGSVAAGMERLGWRRRPRALYELQAAAAVGQMGLIQAYESEFQHHNQHTAQILLTHEDLANRSRYLNARSTLRTLLRLGVVPIVNENDTVATEEIRFGDNDTLSALVANLVEAELLVILTDQEGLFDADPRHYPNASFISEAAANKTELDGMANSRAGALGRGGMITKIRAARRAARSGAITVIASGKEPKILQRIASGETVGTLLWPDRQPLAARKQWLAGQLQTKGRLWLDTGAVKVVREAGRSLLPIGVLACEGNFARGEVVSCLDSDAREIACGLVNYNAEETRRILGHSSHQIEQILGYVDEEELIHRDNLVLL</sequence>
<protein>
    <recommendedName>
        <fullName evidence="1">Glutamate 5-kinase</fullName>
        <ecNumber evidence="1">2.7.2.11</ecNumber>
    </recommendedName>
    <alternativeName>
        <fullName evidence="1">Gamma-glutamyl kinase</fullName>
        <shortName evidence="1">GK</shortName>
    </alternativeName>
</protein>
<dbReference type="EC" id="2.7.2.11" evidence="1"/>
<dbReference type="EMBL" id="CP000127">
    <property type="protein sequence ID" value="ABA59477.1"/>
    <property type="molecule type" value="Genomic_DNA"/>
</dbReference>
<dbReference type="RefSeq" id="WP_002813187.1">
    <property type="nucleotide sequence ID" value="NC_007484.1"/>
</dbReference>
<dbReference type="SMR" id="Q3J6R9"/>
<dbReference type="FunCoup" id="Q3J6R9">
    <property type="interactions" value="406"/>
</dbReference>
<dbReference type="STRING" id="323261.Noc_3036"/>
<dbReference type="KEGG" id="noc:Noc_3036"/>
<dbReference type="eggNOG" id="COG0263">
    <property type="taxonomic scope" value="Bacteria"/>
</dbReference>
<dbReference type="HOGENOM" id="CLU_025400_2_0_6"/>
<dbReference type="InParanoid" id="Q3J6R9"/>
<dbReference type="UniPathway" id="UPA00098">
    <property type="reaction ID" value="UER00359"/>
</dbReference>
<dbReference type="Proteomes" id="UP000006838">
    <property type="component" value="Chromosome"/>
</dbReference>
<dbReference type="GO" id="GO:0005829">
    <property type="term" value="C:cytosol"/>
    <property type="evidence" value="ECO:0007669"/>
    <property type="project" value="TreeGrafter"/>
</dbReference>
<dbReference type="GO" id="GO:0005524">
    <property type="term" value="F:ATP binding"/>
    <property type="evidence" value="ECO:0007669"/>
    <property type="project" value="UniProtKB-KW"/>
</dbReference>
<dbReference type="GO" id="GO:0004349">
    <property type="term" value="F:glutamate 5-kinase activity"/>
    <property type="evidence" value="ECO:0007669"/>
    <property type="project" value="UniProtKB-UniRule"/>
</dbReference>
<dbReference type="GO" id="GO:0003723">
    <property type="term" value="F:RNA binding"/>
    <property type="evidence" value="ECO:0007669"/>
    <property type="project" value="InterPro"/>
</dbReference>
<dbReference type="GO" id="GO:0055129">
    <property type="term" value="P:L-proline biosynthetic process"/>
    <property type="evidence" value="ECO:0007669"/>
    <property type="project" value="UniProtKB-UniRule"/>
</dbReference>
<dbReference type="CDD" id="cd04242">
    <property type="entry name" value="AAK_G5K_ProB"/>
    <property type="match status" value="1"/>
</dbReference>
<dbReference type="CDD" id="cd21157">
    <property type="entry name" value="PUA_G5K"/>
    <property type="match status" value="1"/>
</dbReference>
<dbReference type="FunFam" id="2.30.130.10:FF:000007">
    <property type="entry name" value="Glutamate 5-kinase"/>
    <property type="match status" value="1"/>
</dbReference>
<dbReference type="FunFam" id="3.40.1160.10:FF:000018">
    <property type="entry name" value="Glutamate 5-kinase"/>
    <property type="match status" value="1"/>
</dbReference>
<dbReference type="Gene3D" id="3.40.1160.10">
    <property type="entry name" value="Acetylglutamate kinase-like"/>
    <property type="match status" value="2"/>
</dbReference>
<dbReference type="Gene3D" id="2.30.130.10">
    <property type="entry name" value="PUA domain"/>
    <property type="match status" value="1"/>
</dbReference>
<dbReference type="HAMAP" id="MF_00456">
    <property type="entry name" value="ProB"/>
    <property type="match status" value="1"/>
</dbReference>
<dbReference type="InterPro" id="IPR036393">
    <property type="entry name" value="AceGlu_kinase-like_sf"/>
</dbReference>
<dbReference type="InterPro" id="IPR001048">
    <property type="entry name" value="Asp/Glu/Uridylate_kinase"/>
</dbReference>
<dbReference type="InterPro" id="IPR041739">
    <property type="entry name" value="G5K_ProB"/>
</dbReference>
<dbReference type="InterPro" id="IPR001057">
    <property type="entry name" value="Glu/AcGlu_kinase"/>
</dbReference>
<dbReference type="InterPro" id="IPR011529">
    <property type="entry name" value="Glu_5kinase"/>
</dbReference>
<dbReference type="InterPro" id="IPR005715">
    <property type="entry name" value="Glu_5kinase/COase_Synthase"/>
</dbReference>
<dbReference type="InterPro" id="IPR019797">
    <property type="entry name" value="Glutamate_5-kinase_CS"/>
</dbReference>
<dbReference type="InterPro" id="IPR002478">
    <property type="entry name" value="PUA"/>
</dbReference>
<dbReference type="InterPro" id="IPR015947">
    <property type="entry name" value="PUA-like_sf"/>
</dbReference>
<dbReference type="InterPro" id="IPR036974">
    <property type="entry name" value="PUA_sf"/>
</dbReference>
<dbReference type="NCBIfam" id="TIGR01027">
    <property type="entry name" value="proB"/>
    <property type="match status" value="1"/>
</dbReference>
<dbReference type="PANTHER" id="PTHR43654">
    <property type="entry name" value="GLUTAMATE 5-KINASE"/>
    <property type="match status" value="1"/>
</dbReference>
<dbReference type="PANTHER" id="PTHR43654:SF1">
    <property type="entry name" value="ISOPENTENYL PHOSPHATE KINASE"/>
    <property type="match status" value="1"/>
</dbReference>
<dbReference type="Pfam" id="PF00696">
    <property type="entry name" value="AA_kinase"/>
    <property type="match status" value="1"/>
</dbReference>
<dbReference type="Pfam" id="PF01472">
    <property type="entry name" value="PUA"/>
    <property type="match status" value="1"/>
</dbReference>
<dbReference type="PIRSF" id="PIRSF000729">
    <property type="entry name" value="GK"/>
    <property type="match status" value="1"/>
</dbReference>
<dbReference type="PRINTS" id="PR00474">
    <property type="entry name" value="GLU5KINASE"/>
</dbReference>
<dbReference type="SMART" id="SM00359">
    <property type="entry name" value="PUA"/>
    <property type="match status" value="1"/>
</dbReference>
<dbReference type="SUPFAM" id="SSF53633">
    <property type="entry name" value="Carbamate kinase-like"/>
    <property type="match status" value="1"/>
</dbReference>
<dbReference type="SUPFAM" id="SSF88697">
    <property type="entry name" value="PUA domain-like"/>
    <property type="match status" value="1"/>
</dbReference>
<dbReference type="PROSITE" id="PS00902">
    <property type="entry name" value="GLUTAMATE_5_KINASE"/>
    <property type="match status" value="1"/>
</dbReference>
<dbReference type="PROSITE" id="PS50890">
    <property type="entry name" value="PUA"/>
    <property type="match status" value="1"/>
</dbReference>
<organism>
    <name type="scientific">Nitrosococcus oceani (strain ATCC 19707 / BCRC 17464 / JCM 30415 / NCIMB 11848 / C-107)</name>
    <dbReference type="NCBI Taxonomy" id="323261"/>
    <lineage>
        <taxon>Bacteria</taxon>
        <taxon>Pseudomonadati</taxon>
        <taxon>Pseudomonadota</taxon>
        <taxon>Gammaproteobacteria</taxon>
        <taxon>Chromatiales</taxon>
        <taxon>Chromatiaceae</taxon>
        <taxon>Nitrosococcus</taxon>
    </lineage>
</organism>
<evidence type="ECO:0000255" key="1">
    <source>
        <dbReference type="HAMAP-Rule" id="MF_00456"/>
    </source>
</evidence>
<comment type="function">
    <text evidence="1">Catalyzes the transfer of a phosphate group to glutamate to form L-glutamate 5-phosphate.</text>
</comment>
<comment type="catalytic activity">
    <reaction evidence="1">
        <text>L-glutamate + ATP = L-glutamyl 5-phosphate + ADP</text>
        <dbReference type="Rhea" id="RHEA:14877"/>
        <dbReference type="ChEBI" id="CHEBI:29985"/>
        <dbReference type="ChEBI" id="CHEBI:30616"/>
        <dbReference type="ChEBI" id="CHEBI:58274"/>
        <dbReference type="ChEBI" id="CHEBI:456216"/>
        <dbReference type="EC" id="2.7.2.11"/>
    </reaction>
</comment>
<comment type="pathway">
    <text evidence="1">Amino-acid biosynthesis; L-proline biosynthesis; L-glutamate 5-semialdehyde from L-glutamate: step 1/2.</text>
</comment>
<comment type="subcellular location">
    <subcellularLocation>
        <location evidence="1">Cytoplasm</location>
    </subcellularLocation>
</comment>
<comment type="similarity">
    <text evidence="1">Belongs to the glutamate 5-kinase family.</text>
</comment>
<accession>Q3J6R9</accession>
<proteinExistence type="inferred from homology"/>
<keyword id="KW-0028">Amino-acid biosynthesis</keyword>
<keyword id="KW-0067">ATP-binding</keyword>
<keyword id="KW-0963">Cytoplasm</keyword>
<keyword id="KW-0418">Kinase</keyword>
<keyword id="KW-0547">Nucleotide-binding</keyword>
<keyword id="KW-0641">Proline biosynthesis</keyword>
<keyword id="KW-1185">Reference proteome</keyword>
<keyword id="KW-0808">Transferase</keyword>
<reference key="1">
    <citation type="journal article" date="2006" name="Appl. Environ. Microbiol.">
        <title>Complete genome sequence of the marine, chemolithoautotrophic, ammonia-oxidizing bacterium Nitrosococcus oceani ATCC 19707.</title>
        <authorList>
            <person name="Klotz M.G."/>
            <person name="Arp D.J."/>
            <person name="Chain P.S.G."/>
            <person name="El-Sheikh A.F."/>
            <person name="Hauser L.J."/>
            <person name="Hommes N.G."/>
            <person name="Larimer F.W."/>
            <person name="Malfatti S.A."/>
            <person name="Norton J.M."/>
            <person name="Poret-Peterson A.T."/>
            <person name="Vergez L.M."/>
            <person name="Ward B.B."/>
        </authorList>
    </citation>
    <scope>NUCLEOTIDE SEQUENCE [LARGE SCALE GENOMIC DNA]</scope>
    <source>
        <strain>ATCC 19707 / BCRC 17464 / JCM 30415 / NCIMB 11848 / C-107</strain>
    </source>
</reference>
<name>PROB_NITOC</name>
<feature type="chain" id="PRO_0000230049" description="Glutamate 5-kinase">
    <location>
        <begin position="1"/>
        <end position="375"/>
    </location>
</feature>
<feature type="domain" description="PUA" evidence="1">
    <location>
        <begin position="283"/>
        <end position="361"/>
    </location>
</feature>
<feature type="binding site" evidence="1">
    <location>
        <position position="17"/>
    </location>
    <ligand>
        <name>ATP</name>
        <dbReference type="ChEBI" id="CHEBI:30616"/>
    </ligand>
</feature>
<feature type="binding site" evidence="1">
    <location>
        <position position="57"/>
    </location>
    <ligand>
        <name>substrate</name>
    </ligand>
</feature>
<feature type="binding site" evidence="1">
    <location>
        <position position="144"/>
    </location>
    <ligand>
        <name>substrate</name>
    </ligand>
</feature>
<feature type="binding site" evidence="1">
    <location>
        <position position="156"/>
    </location>
    <ligand>
        <name>substrate</name>
    </ligand>
</feature>
<feature type="binding site" evidence="1">
    <location>
        <begin position="176"/>
        <end position="177"/>
    </location>
    <ligand>
        <name>ATP</name>
        <dbReference type="ChEBI" id="CHEBI:30616"/>
    </ligand>
</feature>
<gene>
    <name evidence="1" type="primary">proB</name>
    <name type="ordered locus">Noc_3036</name>
</gene>